<organism>
    <name type="scientific">Homo sapiens</name>
    <name type="common">Human</name>
    <dbReference type="NCBI Taxonomy" id="9606"/>
    <lineage>
        <taxon>Eukaryota</taxon>
        <taxon>Metazoa</taxon>
        <taxon>Chordata</taxon>
        <taxon>Craniata</taxon>
        <taxon>Vertebrata</taxon>
        <taxon>Euteleostomi</taxon>
        <taxon>Mammalia</taxon>
        <taxon>Eutheria</taxon>
        <taxon>Euarchontoglires</taxon>
        <taxon>Primates</taxon>
        <taxon>Haplorrhini</taxon>
        <taxon>Catarrhini</taxon>
        <taxon>Hominidae</taxon>
        <taxon>Homo</taxon>
    </lineage>
</organism>
<proteinExistence type="evidence at protein level"/>
<accession>Q6ZUS6</accession>
<accession>A6NJE7</accession>
<accession>B4DK90</accession>
<accession>B4DZG3</accession>
<accession>G5EA04</accession>
<accession>Q6NW41</accession>
<accession>Q8N3K8</accession>
<comment type="alternative products">
    <event type="alternative splicing"/>
    <isoform>
        <id>Q6ZUS6-1</id>
        <name>1</name>
        <sequence type="displayed"/>
    </isoform>
    <isoform>
        <id>Q6ZUS6-2</id>
        <name>2</name>
        <sequence type="described" ref="VSP_042498 VSP_034743"/>
    </isoform>
    <isoform>
        <id>Q6ZUS6-3</id>
        <name>3</name>
        <sequence type="described" ref="VSP_042498 VSP_034741 VSP_034742"/>
    </isoform>
    <isoform>
        <id>Q6ZUS6-4</id>
        <name>4</name>
        <sequence type="described" ref="VSP_042498"/>
    </isoform>
    <isoform>
        <id>Q6ZUS6-5</id>
        <name>5</name>
        <sequence type="described" ref="VSP_042499"/>
    </isoform>
    <isoform>
        <id>Q6ZUS6-6</id>
        <name>6</name>
        <sequence type="described" ref="VSP_042500"/>
    </isoform>
</comment>
<comment type="similarity">
    <text evidence="6">Belongs to the CCDC149 family.</text>
</comment>
<comment type="sequence caution" evidence="6">
    <conflict type="erroneous initiation">
        <sequence resource="EMBL-CDS" id="AAH57761"/>
    </conflict>
    <text>Truncated N-terminus.</text>
</comment>
<comment type="sequence caution" evidence="6">
    <conflict type="erroneous initiation">
        <sequence resource="EMBL-CDS" id="AAH67735"/>
    </conflict>
    <text>Truncated N-terminus.</text>
</comment>
<comment type="sequence caution" evidence="6">
    <conflict type="erroneous initiation">
        <sequence resource="EMBL-CDS" id="BAC86142"/>
    </conflict>
    <text>Truncated N-terminus.</text>
</comment>
<comment type="sequence caution" evidence="6">
    <conflict type="frameshift">
        <sequence resource="EMBL-CDS" id="BAC86142"/>
    </conflict>
</comment>
<gene>
    <name type="primary">CCDC149</name>
</gene>
<feature type="chain" id="PRO_0000344209" description="Coiled-coil domain-containing protein 149">
    <location>
        <begin position="1"/>
        <end position="474"/>
    </location>
</feature>
<feature type="region of interest" description="Disordered" evidence="2">
    <location>
        <begin position="301"/>
        <end position="388"/>
    </location>
</feature>
<feature type="region of interest" description="Disordered" evidence="2">
    <location>
        <begin position="405"/>
        <end position="474"/>
    </location>
</feature>
<feature type="coiled-coil region" evidence="1">
    <location>
        <begin position="1"/>
        <end position="199"/>
    </location>
</feature>
<feature type="coiled-coil region" evidence="1">
    <location>
        <begin position="259"/>
        <end position="286"/>
    </location>
</feature>
<feature type="coiled-coil region" evidence="1">
    <location>
        <begin position="385"/>
        <end position="414"/>
    </location>
</feature>
<feature type="compositionally biased region" description="Basic and acidic residues" evidence="2">
    <location>
        <begin position="323"/>
        <end position="337"/>
    </location>
</feature>
<feature type="compositionally biased region" description="Low complexity" evidence="2">
    <location>
        <begin position="343"/>
        <end position="353"/>
    </location>
</feature>
<feature type="splice variant" id="VSP_042500" description="In isoform 6." evidence="3">
    <location>
        <begin position="1"/>
        <end position="72"/>
    </location>
</feature>
<feature type="splice variant" id="VSP_042498" description="In isoform 2, isoform 3 and isoform 4." evidence="4 5">
    <original>M</original>
    <variation>MEEEAMNGDRTESDWQGLVSEYLVCKRKLESKKEALLILSKELDTCQQERDQYKLM</variation>
    <location>
        <position position="1"/>
    </location>
</feature>
<feature type="splice variant" id="VSP_042499" description="In isoform 5." evidence="3">
    <original>M</original>
    <variation>MVVIVVVIIIIIARAATWDSEYLVCKRKLESKKEALLILSKELDTCQQERDQYKLM</variation>
    <location>
        <position position="1"/>
    </location>
</feature>
<feature type="splice variant" id="VSP_034741" description="In isoform 3." evidence="4">
    <original>LLRMTIAKQRLGDEAIG</original>
    <variation>GRLRSKKKMKVVPLLRR</variation>
    <location>
        <begin position="70"/>
        <end position="86"/>
    </location>
</feature>
<feature type="splice variant" id="VSP_034742" description="In isoform 3." evidence="4">
    <location>
        <begin position="87"/>
        <end position="474"/>
    </location>
</feature>
<feature type="splice variant" id="VSP_034743" description="In isoform 2." evidence="5">
    <location>
        <begin position="268"/>
        <end position="474"/>
    </location>
</feature>
<feature type="sequence conflict" description="In Ref. 1; BAG64075." evidence="6" ref="1">
    <original>R</original>
    <variation>Q</variation>
    <location>
        <position position="196"/>
    </location>
</feature>
<evidence type="ECO:0000255" key="1"/>
<evidence type="ECO:0000256" key="2">
    <source>
        <dbReference type="SAM" id="MobiDB-lite"/>
    </source>
</evidence>
<evidence type="ECO:0000303" key="3">
    <source>
    </source>
</evidence>
<evidence type="ECO:0000303" key="4">
    <source>
    </source>
</evidence>
<evidence type="ECO:0000303" key="5">
    <source>
    </source>
</evidence>
<evidence type="ECO:0000305" key="6"/>
<dbReference type="EMBL" id="AK125353">
    <property type="protein sequence ID" value="BAC86142.1"/>
    <property type="status" value="ALT_SEQ"/>
    <property type="molecule type" value="mRNA"/>
</dbReference>
<dbReference type="EMBL" id="AK296454">
    <property type="protein sequence ID" value="BAG59102.1"/>
    <property type="molecule type" value="mRNA"/>
</dbReference>
<dbReference type="EMBL" id="AK302905">
    <property type="protein sequence ID" value="BAG64075.1"/>
    <property type="molecule type" value="mRNA"/>
</dbReference>
<dbReference type="EMBL" id="AL834257">
    <property type="protein sequence ID" value="CAD38932.1"/>
    <property type="molecule type" value="mRNA"/>
</dbReference>
<dbReference type="EMBL" id="AC006390">
    <property type="status" value="NOT_ANNOTATED_CDS"/>
    <property type="molecule type" value="Genomic_DNA"/>
</dbReference>
<dbReference type="EMBL" id="AC113614">
    <property type="status" value="NOT_ANNOTATED_CDS"/>
    <property type="molecule type" value="Genomic_DNA"/>
</dbReference>
<dbReference type="EMBL" id="AC116422">
    <property type="status" value="NOT_ANNOTATED_CDS"/>
    <property type="molecule type" value="Genomic_DNA"/>
</dbReference>
<dbReference type="EMBL" id="CH471069">
    <property type="protein sequence ID" value="EAW92824.1"/>
    <property type="molecule type" value="Genomic_DNA"/>
</dbReference>
<dbReference type="EMBL" id="CH471069">
    <property type="protein sequence ID" value="EAW92825.1"/>
    <property type="molecule type" value="Genomic_DNA"/>
</dbReference>
<dbReference type="EMBL" id="BC067735">
    <property type="protein sequence ID" value="AAH67735.1"/>
    <property type="status" value="ALT_INIT"/>
    <property type="molecule type" value="mRNA"/>
</dbReference>
<dbReference type="EMBL" id="BC057761">
    <property type="protein sequence ID" value="AAH57761.1"/>
    <property type="status" value="ALT_INIT"/>
    <property type="molecule type" value="mRNA"/>
</dbReference>
<dbReference type="CCDS" id="CCDS33967.2">
    <molecule id="Q6ZUS6-5"/>
</dbReference>
<dbReference type="RefSeq" id="NP_001124198.1">
    <property type="nucleotide sequence ID" value="NM_001130726.3"/>
</dbReference>
<dbReference type="RefSeq" id="NP_001317572.1">
    <property type="nucleotide sequence ID" value="NM_001330643.1"/>
</dbReference>
<dbReference type="RefSeq" id="NP_001317573.1">
    <molecule id="Q6ZUS6-1"/>
    <property type="nucleotide sequence ID" value="NM_001330644.2"/>
</dbReference>
<dbReference type="RefSeq" id="NP_775734.2">
    <molecule id="Q6ZUS6-5"/>
    <property type="nucleotide sequence ID" value="NM_173463.6"/>
</dbReference>
<dbReference type="RefSeq" id="XP_016864316.1">
    <molecule id="Q6ZUS6-5"/>
    <property type="nucleotide sequence ID" value="XM_017008827.3"/>
</dbReference>
<dbReference type="RefSeq" id="XP_054207195.1">
    <molecule id="Q6ZUS6-5"/>
    <property type="nucleotide sequence ID" value="XM_054351220.1"/>
</dbReference>
<dbReference type="SMR" id="Q6ZUS6"/>
<dbReference type="BioGRID" id="124790">
    <property type="interactions" value="5"/>
</dbReference>
<dbReference type="FunCoup" id="Q6ZUS6">
    <property type="interactions" value="241"/>
</dbReference>
<dbReference type="IntAct" id="Q6ZUS6">
    <property type="interactions" value="4"/>
</dbReference>
<dbReference type="STRING" id="9606.ENSP00000488929"/>
<dbReference type="iPTMnet" id="Q6ZUS6"/>
<dbReference type="PhosphoSitePlus" id="Q6ZUS6"/>
<dbReference type="BioMuta" id="CCDC149"/>
<dbReference type="DMDM" id="205371874"/>
<dbReference type="jPOST" id="Q6ZUS6"/>
<dbReference type="MassIVE" id="Q6ZUS6"/>
<dbReference type="PaxDb" id="9606-ENSP00000425715"/>
<dbReference type="PeptideAtlas" id="Q6ZUS6"/>
<dbReference type="ProteomicsDB" id="68349">
    <molecule id="Q6ZUS6-1"/>
</dbReference>
<dbReference type="ProteomicsDB" id="68350">
    <molecule id="Q6ZUS6-2"/>
</dbReference>
<dbReference type="ProteomicsDB" id="68351">
    <molecule id="Q6ZUS6-3"/>
</dbReference>
<dbReference type="ProteomicsDB" id="68352">
    <molecule id="Q6ZUS6-4"/>
</dbReference>
<dbReference type="ProteomicsDB" id="68353">
    <molecule id="Q6ZUS6-5"/>
</dbReference>
<dbReference type="ProteomicsDB" id="68354">
    <molecule id="Q6ZUS6-6"/>
</dbReference>
<dbReference type="Antibodypedia" id="65174">
    <property type="antibodies" value="25 antibodies from 9 providers"/>
</dbReference>
<dbReference type="DNASU" id="91050"/>
<dbReference type="Ensembl" id="ENST00000389609.8">
    <molecule id="Q6ZUS6-5"/>
    <property type="protein sequence ID" value="ENSP00000374260.4"/>
    <property type="gene ID" value="ENSG00000181982.20"/>
</dbReference>
<dbReference type="GeneID" id="91050"/>
<dbReference type="KEGG" id="hsa:91050"/>
<dbReference type="UCSC" id="uc003grc.4">
    <molecule id="Q6ZUS6-1"/>
    <property type="organism name" value="human"/>
</dbReference>
<dbReference type="AGR" id="HGNC:25405"/>
<dbReference type="CTD" id="91050"/>
<dbReference type="DisGeNET" id="91050"/>
<dbReference type="GeneCards" id="CCDC149"/>
<dbReference type="HGNC" id="HGNC:25405">
    <property type="gene designation" value="CCDC149"/>
</dbReference>
<dbReference type="HPA" id="ENSG00000181982">
    <property type="expression patterns" value="Low tissue specificity"/>
</dbReference>
<dbReference type="neXtProt" id="NX_Q6ZUS6"/>
<dbReference type="OpenTargets" id="ENSG00000181982"/>
<dbReference type="PharmGKB" id="PA162381560"/>
<dbReference type="VEuPathDB" id="HostDB:ENSG00000181982"/>
<dbReference type="eggNOG" id="KOG4687">
    <property type="taxonomic scope" value="Eukaryota"/>
</dbReference>
<dbReference type="GeneTree" id="ENSGT00390000015958"/>
<dbReference type="HOGENOM" id="CLU_016190_2_0_1"/>
<dbReference type="InParanoid" id="Q6ZUS6"/>
<dbReference type="OrthoDB" id="5917629at2759"/>
<dbReference type="PAN-GO" id="Q6ZUS6">
    <property type="GO annotations" value="0 GO annotations based on evolutionary models"/>
</dbReference>
<dbReference type="PhylomeDB" id="Q6ZUS6"/>
<dbReference type="TreeFam" id="TF319794"/>
<dbReference type="PathwayCommons" id="Q6ZUS6"/>
<dbReference type="SignaLink" id="Q6ZUS6"/>
<dbReference type="BioGRID-ORCS" id="91050">
    <property type="hits" value="11 hits in 1143 CRISPR screens"/>
</dbReference>
<dbReference type="ChiTaRS" id="CCDC149">
    <property type="organism name" value="human"/>
</dbReference>
<dbReference type="GenomeRNAi" id="91050"/>
<dbReference type="Pharos" id="Q6ZUS6">
    <property type="development level" value="Tdark"/>
</dbReference>
<dbReference type="PRO" id="PR:Q6ZUS6"/>
<dbReference type="Proteomes" id="UP000005640">
    <property type="component" value="Chromosome 4"/>
</dbReference>
<dbReference type="RNAct" id="Q6ZUS6">
    <property type="molecule type" value="protein"/>
</dbReference>
<dbReference type="Bgee" id="ENSG00000181982">
    <property type="expression patterns" value="Expressed in parotid gland and 153 other cell types or tissues"/>
</dbReference>
<dbReference type="ExpressionAtlas" id="Q6ZUS6">
    <property type="expression patterns" value="baseline and differential"/>
</dbReference>
<dbReference type="Gene3D" id="1.10.287.1490">
    <property type="match status" value="1"/>
</dbReference>
<dbReference type="InterPro" id="IPR019179">
    <property type="entry name" value="Coiled-coil_dom-contain_pr_149"/>
</dbReference>
<dbReference type="PANTHER" id="PTHR21682">
    <property type="entry name" value="COILED-COIL DOMAIN-CONTAINING PROTEIN 149"/>
    <property type="match status" value="1"/>
</dbReference>
<dbReference type="PANTHER" id="PTHR21682:SF2">
    <property type="entry name" value="COILED-COIL DOMAIN-CONTAINING PROTEIN 149"/>
    <property type="match status" value="1"/>
</dbReference>
<dbReference type="Pfam" id="PF09789">
    <property type="entry name" value="CC149"/>
    <property type="match status" value="1"/>
</dbReference>
<name>CC149_HUMAN</name>
<keyword id="KW-0025">Alternative splicing</keyword>
<keyword id="KW-0175">Coiled coil</keyword>
<keyword id="KW-1267">Proteomics identification</keyword>
<keyword id="KW-1185">Reference proteome</keyword>
<sequence length="474" mass="52796">MANQLRERHQSLKKKYRELIDGDPSLPPEKRKQANLAQLLRDSQDRNKHLGEEIKELQQRLGEVQGDNKLLRMTIAKQRLGDEAIGVRHFAAHEREDLVQQLERAKEQIESLEHDLQASVDELQDVKEERSSYQDKVERLNQELNHILSGHENRIIDVDALCMENRYLQERLKQLHEEVNLLKSNIAKYKNALERRKNSKGQGKSSSSALTGVLSAKQVQDLLSEDHGCSLPATPQSISDLKSLATALLETIHEKNMVIQHQRQTNKILGNRVAELEKKLRTLEVSGLWSLPGGKDTILFSDPTLPSGQRSRSPLLKFVEQPTENKADPKDGEAQKQEEDESCAAAEALTAPEDAGRPAVNSPANQSRGNQCKLFHPSLPQLPSEEEVNSLGREIIKLTKEQAAAELEEVRRESPIEGQRSETGPAPPGLAIQGELPKSHLDSFEASRPAAKASTPEDGKGIPEGGGMRSTVKT</sequence>
<protein>
    <recommendedName>
        <fullName>Coiled-coil domain-containing protein 149</fullName>
    </recommendedName>
</protein>
<reference key="1">
    <citation type="journal article" date="2004" name="Nat. Genet.">
        <title>Complete sequencing and characterization of 21,243 full-length human cDNAs.</title>
        <authorList>
            <person name="Ota T."/>
            <person name="Suzuki Y."/>
            <person name="Nishikawa T."/>
            <person name="Otsuki T."/>
            <person name="Sugiyama T."/>
            <person name="Irie R."/>
            <person name="Wakamatsu A."/>
            <person name="Hayashi K."/>
            <person name="Sato H."/>
            <person name="Nagai K."/>
            <person name="Kimura K."/>
            <person name="Makita H."/>
            <person name="Sekine M."/>
            <person name="Obayashi M."/>
            <person name="Nishi T."/>
            <person name="Shibahara T."/>
            <person name="Tanaka T."/>
            <person name="Ishii S."/>
            <person name="Yamamoto J."/>
            <person name="Saito K."/>
            <person name="Kawai Y."/>
            <person name="Isono Y."/>
            <person name="Nakamura Y."/>
            <person name="Nagahari K."/>
            <person name="Murakami K."/>
            <person name="Yasuda T."/>
            <person name="Iwayanagi T."/>
            <person name="Wagatsuma M."/>
            <person name="Shiratori A."/>
            <person name="Sudo H."/>
            <person name="Hosoiri T."/>
            <person name="Kaku Y."/>
            <person name="Kodaira H."/>
            <person name="Kondo H."/>
            <person name="Sugawara M."/>
            <person name="Takahashi M."/>
            <person name="Kanda K."/>
            <person name="Yokoi T."/>
            <person name="Furuya T."/>
            <person name="Kikkawa E."/>
            <person name="Omura Y."/>
            <person name="Abe K."/>
            <person name="Kamihara K."/>
            <person name="Katsuta N."/>
            <person name="Sato K."/>
            <person name="Tanikawa M."/>
            <person name="Yamazaki M."/>
            <person name="Ninomiya K."/>
            <person name="Ishibashi T."/>
            <person name="Yamashita H."/>
            <person name="Murakawa K."/>
            <person name="Fujimori K."/>
            <person name="Tanai H."/>
            <person name="Kimata M."/>
            <person name="Watanabe M."/>
            <person name="Hiraoka S."/>
            <person name="Chiba Y."/>
            <person name="Ishida S."/>
            <person name="Ono Y."/>
            <person name="Takiguchi S."/>
            <person name="Watanabe S."/>
            <person name="Yosida M."/>
            <person name="Hotuta T."/>
            <person name="Kusano J."/>
            <person name="Kanehori K."/>
            <person name="Takahashi-Fujii A."/>
            <person name="Hara H."/>
            <person name="Tanase T.-O."/>
            <person name="Nomura Y."/>
            <person name="Togiya S."/>
            <person name="Komai F."/>
            <person name="Hara R."/>
            <person name="Takeuchi K."/>
            <person name="Arita M."/>
            <person name="Imose N."/>
            <person name="Musashino K."/>
            <person name="Yuuki H."/>
            <person name="Oshima A."/>
            <person name="Sasaki N."/>
            <person name="Aotsuka S."/>
            <person name="Yoshikawa Y."/>
            <person name="Matsunawa H."/>
            <person name="Ichihara T."/>
            <person name="Shiohata N."/>
            <person name="Sano S."/>
            <person name="Moriya S."/>
            <person name="Momiyama H."/>
            <person name="Satoh N."/>
            <person name="Takami S."/>
            <person name="Terashima Y."/>
            <person name="Suzuki O."/>
            <person name="Nakagawa S."/>
            <person name="Senoh A."/>
            <person name="Mizoguchi H."/>
            <person name="Goto Y."/>
            <person name="Shimizu F."/>
            <person name="Wakebe H."/>
            <person name="Hishigaki H."/>
            <person name="Watanabe T."/>
            <person name="Sugiyama A."/>
            <person name="Takemoto M."/>
            <person name="Kawakami B."/>
            <person name="Yamazaki M."/>
            <person name="Watanabe K."/>
            <person name="Kumagai A."/>
            <person name="Itakura S."/>
            <person name="Fukuzumi Y."/>
            <person name="Fujimori Y."/>
            <person name="Komiyama M."/>
            <person name="Tashiro H."/>
            <person name="Tanigami A."/>
            <person name="Fujiwara T."/>
            <person name="Ono T."/>
            <person name="Yamada K."/>
            <person name="Fujii Y."/>
            <person name="Ozaki K."/>
            <person name="Hirao M."/>
            <person name="Ohmori Y."/>
            <person name="Kawabata A."/>
            <person name="Hikiji T."/>
            <person name="Kobatake N."/>
            <person name="Inagaki H."/>
            <person name="Ikema Y."/>
            <person name="Okamoto S."/>
            <person name="Okitani R."/>
            <person name="Kawakami T."/>
            <person name="Noguchi S."/>
            <person name="Itoh T."/>
            <person name="Shigeta K."/>
            <person name="Senba T."/>
            <person name="Matsumura K."/>
            <person name="Nakajima Y."/>
            <person name="Mizuno T."/>
            <person name="Morinaga M."/>
            <person name="Sasaki M."/>
            <person name="Togashi T."/>
            <person name="Oyama M."/>
            <person name="Hata H."/>
            <person name="Watanabe M."/>
            <person name="Komatsu T."/>
            <person name="Mizushima-Sugano J."/>
            <person name="Satoh T."/>
            <person name="Shirai Y."/>
            <person name="Takahashi Y."/>
            <person name="Nakagawa K."/>
            <person name="Okumura K."/>
            <person name="Nagase T."/>
            <person name="Nomura N."/>
            <person name="Kikuchi H."/>
            <person name="Masuho Y."/>
            <person name="Yamashita R."/>
            <person name="Nakai K."/>
            <person name="Yada T."/>
            <person name="Nakamura Y."/>
            <person name="Ohara O."/>
            <person name="Isogai T."/>
            <person name="Sugano S."/>
        </authorList>
    </citation>
    <scope>NUCLEOTIDE SEQUENCE [LARGE SCALE MRNA] (ISOFORMS 1; 5 AND 6)</scope>
    <source>
        <tissue>Teratocarcinoma</tissue>
        <tissue>Testis</tissue>
        <tissue>Thalamus</tissue>
    </source>
</reference>
<reference key="2">
    <citation type="journal article" date="2007" name="BMC Genomics">
        <title>The full-ORF clone resource of the German cDNA consortium.</title>
        <authorList>
            <person name="Bechtel S."/>
            <person name="Rosenfelder H."/>
            <person name="Duda A."/>
            <person name="Schmidt C.P."/>
            <person name="Ernst U."/>
            <person name="Wellenreuther R."/>
            <person name="Mehrle A."/>
            <person name="Schuster C."/>
            <person name="Bahr A."/>
            <person name="Bloecker H."/>
            <person name="Heubner D."/>
            <person name="Hoerlein A."/>
            <person name="Michel G."/>
            <person name="Wedler H."/>
            <person name="Koehrer K."/>
            <person name="Ottenwaelder B."/>
            <person name="Poustka A."/>
            <person name="Wiemann S."/>
            <person name="Schupp I."/>
        </authorList>
    </citation>
    <scope>NUCLEOTIDE SEQUENCE [LARGE SCALE MRNA] (ISOFORM 2)</scope>
    <source>
        <tissue>Amygdala</tissue>
    </source>
</reference>
<reference key="3">
    <citation type="journal article" date="2005" name="Nature">
        <title>Generation and annotation of the DNA sequences of human chromosomes 2 and 4.</title>
        <authorList>
            <person name="Hillier L.W."/>
            <person name="Graves T.A."/>
            <person name="Fulton R.S."/>
            <person name="Fulton L.A."/>
            <person name="Pepin K.H."/>
            <person name="Minx P."/>
            <person name="Wagner-McPherson C."/>
            <person name="Layman D."/>
            <person name="Wylie K."/>
            <person name="Sekhon M."/>
            <person name="Becker M.C."/>
            <person name="Fewell G.A."/>
            <person name="Delehaunty K.D."/>
            <person name="Miner T.L."/>
            <person name="Nash W.E."/>
            <person name="Kremitzki C."/>
            <person name="Oddy L."/>
            <person name="Du H."/>
            <person name="Sun H."/>
            <person name="Bradshaw-Cordum H."/>
            <person name="Ali J."/>
            <person name="Carter J."/>
            <person name="Cordes M."/>
            <person name="Harris A."/>
            <person name="Isak A."/>
            <person name="van Brunt A."/>
            <person name="Nguyen C."/>
            <person name="Du F."/>
            <person name="Courtney L."/>
            <person name="Kalicki J."/>
            <person name="Ozersky P."/>
            <person name="Abbott S."/>
            <person name="Armstrong J."/>
            <person name="Belter E.A."/>
            <person name="Caruso L."/>
            <person name="Cedroni M."/>
            <person name="Cotton M."/>
            <person name="Davidson T."/>
            <person name="Desai A."/>
            <person name="Elliott G."/>
            <person name="Erb T."/>
            <person name="Fronick C."/>
            <person name="Gaige T."/>
            <person name="Haakenson W."/>
            <person name="Haglund K."/>
            <person name="Holmes A."/>
            <person name="Harkins R."/>
            <person name="Kim K."/>
            <person name="Kruchowski S.S."/>
            <person name="Strong C.M."/>
            <person name="Grewal N."/>
            <person name="Goyea E."/>
            <person name="Hou S."/>
            <person name="Levy A."/>
            <person name="Martinka S."/>
            <person name="Mead K."/>
            <person name="McLellan M.D."/>
            <person name="Meyer R."/>
            <person name="Randall-Maher J."/>
            <person name="Tomlinson C."/>
            <person name="Dauphin-Kohlberg S."/>
            <person name="Kozlowicz-Reilly A."/>
            <person name="Shah N."/>
            <person name="Swearengen-Shahid S."/>
            <person name="Snider J."/>
            <person name="Strong J.T."/>
            <person name="Thompson J."/>
            <person name="Yoakum M."/>
            <person name="Leonard S."/>
            <person name="Pearman C."/>
            <person name="Trani L."/>
            <person name="Radionenko M."/>
            <person name="Waligorski J.E."/>
            <person name="Wang C."/>
            <person name="Rock S.M."/>
            <person name="Tin-Wollam A.-M."/>
            <person name="Maupin R."/>
            <person name="Latreille P."/>
            <person name="Wendl M.C."/>
            <person name="Yang S.-P."/>
            <person name="Pohl C."/>
            <person name="Wallis J.W."/>
            <person name="Spieth J."/>
            <person name="Bieri T.A."/>
            <person name="Berkowicz N."/>
            <person name="Nelson J.O."/>
            <person name="Osborne J."/>
            <person name="Ding L."/>
            <person name="Meyer R."/>
            <person name="Sabo A."/>
            <person name="Shotland Y."/>
            <person name="Sinha P."/>
            <person name="Wohldmann P.E."/>
            <person name="Cook L.L."/>
            <person name="Hickenbotham M.T."/>
            <person name="Eldred J."/>
            <person name="Williams D."/>
            <person name="Jones T.A."/>
            <person name="She X."/>
            <person name="Ciccarelli F.D."/>
            <person name="Izaurralde E."/>
            <person name="Taylor J."/>
            <person name="Schmutz J."/>
            <person name="Myers R.M."/>
            <person name="Cox D.R."/>
            <person name="Huang X."/>
            <person name="McPherson J.D."/>
            <person name="Mardis E.R."/>
            <person name="Clifton S.W."/>
            <person name="Warren W.C."/>
            <person name="Chinwalla A.T."/>
            <person name="Eddy S.R."/>
            <person name="Marra M.A."/>
            <person name="Ovcharenko I."/>
            <person name="Furey T.S."/>
            <person name="Miller W."/>
            <person name="Eichler E.E."/>
            <person name="Bork P."/>
            <person name="Suyama M."/>
            <person name="Torrents D."/>
            <person name="Waterston R.H."/>
            <person name="Wilson R.K."/>
        </authorList>
    </citation>
    <scope>NUCLEOTIDE SEQUENCE [LARGE SCALE GENOMIC DNA]</scope>
</reference>
<reference key="4">
    <citation type="submission" date="2005-07" db="EMBL/GenBank/DDBJ databases">
        <authorList>
            <person name="Mural R.J."/>
            <person name="Istrail S."/>
            <person name="Sutton G.G."/>
            <person name="Florea L."/>
            <person name="Halpern A.L."/>
            <person name="Mobarry C.M."/>
            <person name="Lippert R."/>
            <person name="Walenz B."/>
            <person name="Shatkay H."/>
            <person name="Dew I."/>
            <person name="Miller J.R."/>
            <person name="Flanigan M.J."/>
            <person name="Edwards N.J."/>
            <person name="Bolanos R."/>
            <person name="Fasulo D."/>
            <person name="Halldorsson B.V."/>
            <person name="Hannenhalli S."/>
            <person name="Turner R."/>
            <person name="Yooseph S."/>
            <person name="Lu F."/>
            <person name="Nusskern D.R."/>
            <person name="Shue B.C."/>
            <person name="Zheng X.H."/>
            <person name="Zhong F."/>
            <person name="Delcher A.L."/>
            <person name="Huson D.H."/>
            <person name="Kravitz S.A."/>
            <person name="Mouchard L."/>
            <person name="Reinert K."/>
            <person name="Remington K.A."/>
            <person name="Clark A.G."/>
            <person name="Waterman M.S."/>
            <person name="Eichler E.E."/>
            <person name="Adams M.D."/>
            <person name="Hunkapiller M.W."/>
            <person name="Myers E.W."/>
            <person name="Venter J.C."/>
        </authorList>
    </citation>
    <scope>NUCLEOTIDE SEQUENCE [LARGE SCALE GENOMIC DNA]</scope>
</reference>
<reference key="5">
    <citation type="journal article" date="2004" name="Genome Res.">
        <title>The status, quality, and expansion of the NIH full-length cDNA project: the Mammalian Gene Collection (MGC).</title>
        <authorList>
            <consortium name="The MGC Project Team"/>
        </authorList>
    </citation>
    <scope>NUCLEOTIDE SEQUENCE [LARGE SCALE MRNA] (ISOFORM 3)</scope>
    <source>
        <tissue>Brain</tissue>
    </source>
</reference>